<proteinExistence type="inferred from homology"/>
<organism>
    <name type="scientific">Thiobacillus denitrificans (strain ATCC 25259 / T1)</name>
    <dbReference type="NCBI Taxonomy" id="292415"/>
    <lineage>
        <taxon>Bacteria</taxon>
        <taxon>Pseudomonadati</taxon>
        <taxon>Pseudomonadota</taxon>
        <taxon>Betaproteobacteria</taxon>
        <taxon>Nitrosomonadales</taxon>
        <taxon>Thiobacillaceae</taxon>
        <taxon>Thiobacillus</taxon>
    </lineage>
</organism>
<gene>
    <name evidence="1" type="primary">dapA</name>
    <name type="ordered locus">Tbd_1098</name>
</gene>
<reference key="1">
    <citation type="journal article" date="2006" name="J. Bacteriol.">
        <title>The genome sequence of the obligately chemolithoautotrophic, facultatively anaerobic bacterium Thiobacillus denitrificans.</title>
        <authorList>
            <person name="Beller H.R."/>
            <person name="Chain P.S."/>
            <person name="Letain T.E."/>
            <person name="Chakicherla A."/>
            <person name="Larimer F.W."/>
            <person name="Richardson P.M."/>
            <person name="Coleman M.A."/>
            <person name="Wood A.P."/>
            <person name="Kelly D.P."/>
        </authorList>
    </citation>
    <scope>NUCLEOTIDE SEQUENCE [LARGE SCALE GENOMIC DNA]</scope>
    <source>
        <strain>ATCC 25259 / T1</strain>
    </source>
</reference>
<dbReference type="EC" id="4.3.3.7" evidence="1"/>
<dbReference type="EMBL" id="CP000116">
    <property type="protein sequence ID" value="AAZ97051.1"/>
    <property type="molecule type" value="Genomic_DNA"/>
</dbReference>
<dbReference type="RefSeq" id="WP_011311610.1">
    <property type="nucleotide sequence ID" value="NC_007404.1"/>
</dbReference>
<dbReference type="SMR" id="Q3SJU8"/>
<dbReference type="STRING" id="292415.Tbd_1098"/>
<dbReference type="KEGG" id="tbd:Tbd_1098"/>
<dbReference type="eggNOG" id="COG0329">
    <property type="taxonomic scope" value="Bacteria"/>
</dbReference>
<dbReference type="HOGENOM" id="CLU_049343_7_1_4"/>
<dbReference type="OrthoDB" id="9782828at2"/>
<dbReference type="UniPathway" id="UPA00034">
    <property type="reaction ID" value="UER00017"/>
</dbReference>
<dbReference type="Proteomes" id="UP000008291">
    <property type="component" value="Chromosome"/>
</dbReference>
<dbReference type="GO" id="GO:0005829">
    <property type="term" value="C:cytosol"/>
    <property type="evidence" value="ECO:0007669"/>
    <property type="project" value="TreeGrafter"/>
</dbReference>
<dbReference type="GO" id="GO:0008840">
    <property type="term" value="F:4-hydroxy-tetrahydrodipicolinate synthase activity"/>
    <property type="evidence" value="ECO:0007669"/>
    <property type="project" value="UniProtKB-UniRule"/>
</dbReference>
<dbReference type="GO" id="GO:0019877">
    <property type="term" value="P:diaminopimelate biosynthetic process"/>
    <property type="evidence" value="ECO:0007669"/>
    <property type="project" value="UniProtKB-UniRule"/>
</dbReference>
<dbReference type="GO" id="GO:0009089">
    <property type="term" value="P:lysine biosynthetic process via diaminopimelate"/>
    <property type="evidence" value="ECO:0007669"/>
    <property type="project" value="UniProtKB-UniRule"/>
</dbReference>
<dbReference type="CDD" id="cd00950">
    <property type="entry name" value="DHDPS"/>
    <property type="match status" value="1"/>
</dbReference>
<dbReference type="Gene3D" id="3.20.20.70">
    <property type="entry name" value="Aldolase class I"/>
    <property type="match status" value="1"/>
</dbReference>
<dbReference type="HAMAP" id="MF_00418">
    <property type="entry name" value="DapA"/>
    <property type="match status" value="1"/>
</dbReference>
<dbReference type="InterPro" id="IPR013785">
    <property type="entry name" value="Aldolase_TIM"/>
</dbReference>
<dbReference type="InterPro" id="IPR005263">
    <property type="entry name" value="DapA"/>
</dbReference>
<dbReference type="InterPro" id="IPR002220">
    <property type="entry name" value="DapA-like"/>
</dbReference>
<dbReference type="InterPro" id="IPR020625">
    <property type="entry name" value="Schiff_base-form_aldolases_AS"/>
</dbReference>
<dbReference type="InterPro" id="IPR020624">
    <property type="entry name" value="Schiff_base-form_aldolases_CS"/>
</dbReference>
<dbReference type="NCBIfam" id="TIGR00674">
    <property type="entry name" value="dapA"/>
    <property type="match status" value="1"/>
</dbReference>
<dbReference type="PANTHER" id="PTHR12128:SF66">
    <property type="entry name" value="4-HYDROXY-2-OXOGLUTARATE ALDOLASE, MITOCHONDRIAL"/>
    <property type="match status" value="1"/>
</dbReference>
<dbReference type="PANTHER" id="PTHR12128">
    <property type="entry name" value="DIHYDRODIPICOLINATE SYNTHASE"/>
    <property type="match status" value="1"/>
</dbReference>
<dbReference type="Pfam" id="PF00701">
    <property type="entry name" value="DHDPS"/>
    <property type="match status" value="1"/>
</dbReference>
<dbReference type="PIRSF" id="PIRSF001365">
    <property type="entry name" value="DHDPS"/>
    <property type="match status" value="1"/>
</dbReference>
<dbReference type="PRINTS" id="PR00146">
    <property type="entry name" value="DHPICSNTHASE"/>
</dbReference>
<dbReference type="SMART" id="SM01130">
    <property type="entry name" value="DHDPS"/>
    <property type="match status" value="1"/>
</dbReference>
<dbReference type="SUPFAM" id="SSF51569">
    <property type="entry name" value="Aldolase"/>
    <property type="match status" value="1"/>
</dbReference>
<dbReference type="PROSITE" id="PS00665">
    <property type="entry name" value="DHDPS_1"/>
    <property type="match status" value="1"/>
</dbReference>
<dbReference type="PROSITE" id="PS00666">
    <property type="entry name" value="DHDPS_2"/>
    <property type="match status" value="1"/>
</dbReference>
<feature type="chain" id="PRO_0000340995" description="4-hydroxy-tetrahydrodipicolinate synthase">
    <location>
        <begin position="1"/>
        <end position="296"/>
    </location>
</feature>
<feature type="active site" description="Proton donor/acceptor" evidence="1">
    <location>
        <position position="138"/>
    </location>
</feature>
<feature type="active site" description="Schiff-base intermediate with substrate" evidence="1">
    <location>
        <position position="166"/>
    </location>
</feature>
<feature type="binding site" evidence="1">
    <location>
        <position position="50"/>
    </location>
    <ligand>
        <name>pyruvate</name>
        <dbReference type="ChEBI" id="CHEBI:15361"/>
    </ligand>
</feature>
<feature type="binding site" evidence="1">
    <location>
        <position position="208"/>
    </location>
    <ligand>
        <name>pyruvate</name>
        <dbReference type="ChEBI" id="CHEBI:15361"/>
    </ligand>
</feature>
<feature type="site" description="Part of a proton relay during catalysis" evidence="1">
    <location>
        <position position="49"/>
    </location>
</feature>
<feature type="site" description="Part of a proton relay during catalysis" evidence="1">
    <location>
        <position position="112"/>
    </location>
</feature>
<protein>
    <recommendedName>
        <fullName evidence="1">4-hydroxy-tetrahydrodipicolinate synthase</fullName>
        <shortName evidence="1">HTPA synthase</shortName>
        <ecNumber evidence="1">4.3.3.7</ecNumber>
    </recommendedName>
</protein>
<accession>Q3SJU8</accession>
<name>DAPA_THIDA</name>
<keyword id="KW-0028">Amino-acid biosynthesis</keyword>
<keyword id="KW-0963">Cytoplasm</keyword>
<keyword id="KW-0220">Diaminopimelate biosynthesis</keyword>
<keyword id="KW-0456">Lyase</keyword>
<keyword id="KW-0457">Lysine biosynthesis</keyword>
<keyword id="KW-1185">Reference proteome</keyword>
<keyword id="KW-0704">Schiff base</keyword>
<evidence type="ECO:0000255" key="1">
    <source>
        <dbReference type="HAMAP-Rule" id="MF_00418"/>
    </source>
</evidence>
<evidence type="ECO:0000305" key="2"/>
<sequence>MAEISTARGSLVAIVTPMSDDGALDLGALRRLIDWHIEQGTDGIVIVGTTGESPTVNFDEHCLLIRTAVEQAGGRVPVIAGTGANSTSEAIALTECARAAGAQAGLSVVPYYNKPTQEGLYQHYRKIAEAVDLPLILYNVPGRTVADLANDTAVRLAEVPGIVGLKDATGNMERAADLVRRVPKGFALYSGDDASALPFMLLGGHGVISVTANVAPRLMHEMCVAAFEGNLARARECNDALLPLHSKLFVEANPIPVKWACAELGLIPPGLRLPLTPLSGGQHEVVRAAMRHAELI</sequence>
<comment type="function">
    <text evidence="1">Catalyzes the condensation of (S)-aspartate-beta-semialdehyde [(S)-ASA] and pyruvate to 4-hydroxy-tetrahydrodipicolinate (HTPA).</text>
</comment>
<comment type="catalytic activity">
    <reaction evidence="1">
        <text>L-aspartate 4-semialdehyde + pyruvate = (2S,4S)-4-hydroxy-2,3,4,5-tetrahydrodipicolinate + H2O + H(+)</text>
        <dbReference type="Rhea" id="RHEA:34171"/>
        <dbReference type="ChEBI" id="CHEBI:15361"/>
        <dbReference type="ChEBI" id="CHEBI:15377"/>
        <dbReference type="ChEBI" id="CHEBI:15378"/>
        <dbReference type="ChEBI" id="CHEBI:67139"/>
        <dbReference type="ChEBI" id="CHEBI:537519"/>
        <dbReference type="EC" id="4.3.3.7"/>
    </reaction>
</comment>
<comment type="pathway">
    <text evidence="1">Amino-acid biosynthesis; L-lysine biosynthesis via DAP pathway; (S)-tetrahydrodipicolinate from L-aspartate: step 3/4.</text>
</comment>
<comment type="subunit">
    <text evidence="1">Homotetramer; dimer of dimers.</text>
</comment>
<comment type="subcellular location">
    <subcellularLocation>
        <location evidence="1">Cytoplasm</location>
    </subcellularLocation>
</comment>
<comment type="similarity">
    <text evidence="1">Belongs to the DapA family.</text>
</comment>
<comment type="caution">
    <text evidence="2">Was originally thought to be a dihydrodipicolinate synthase (DHDPS), catalyzing the condensation of (S)-aspartate-beta-semialdehyde [(S)-ASA] and pyruvate to dihydrodipicolinate (DHDP). However, it was shown in E.coli that the product of the enzymatic reaction is not dihydrodipicolinate but in fact (4S)-4-hydroxy-2,3,4,5-tetrahydro-(2S)-dipicolinic acid (HTPA), and that the consecutive dehydration reaction leading to DHDP is not spontaneous but catalyzed by DapB.</text>
</comment>